<evidence type="ECO:0000255" key="1">
    <source>
        <dbReference type="HAMAP-Rule" id="MF_00530"/>
    </source>
</evidence>
<evidence type="ECO:0000305" key="2"/>
<organism>
    <name type="scientific">Gluconacetobacter diazotrophicus (strain ATCC 49037 / DSM 5601 / CCUG 37298 / CIP 103539 / LMG 7603 / PAl5)</name>
    <dbReference type="NCBI Taxonomy" id="272568"/>
    <lineage>
        <taxon>Bacteria</taxon>
        <taxon>Pseudomonadati</taxon>
        <taxon>Pseudomonadota</taxon>
        <taxon>Alphaproteobacteria</taxon>
        <taxon>Acetobacterales</taxon>
        <taxon>Acetobacteraceae</taxon>
        <taxon>Gluconacetobacter</taxon>
    </lineage>
</organism>
<gene>
    <name evidence="1" type="primary">atpC</name>
    <name type="ordered locus">GDI0697</name>
    <name type="ordered locus">Gdia_1312</name>
</gene>
<dbReference type="EMBL" id="AM889285">
    <property type="protein sequence ID" value="CAP54640.1"/>
    <property type="molecule type" value="Genomic_DNA"/>
</dbReference>
<dbReference type="EMBL" id="CP001189">
    <property type="protein sequence ID" value="ACI51094.1"/>
    <property type="status" value="ALT_INIT"/>
    <property type="molecule type" value="Genomic_DNA"/>
</dbReference>
<dbReference type="RefSeq" id="WP_012553706.1">
    <property type="nucleotide sequence ID" value="NC_011365.1"/>
</dbReference>
<dbReference type="SMR" id="A9H9B1"/>
<dbReference type="STRING" id="272568.GDI0697"/>
<dbReference type="KEGG" id="gdi:GDI0697"/>
<dbReference type="KEGG" id="gdj:Gdia_1312"/>
<dbReference type="eggNOG" id="COG0355">
    <property type="taxonomic scope" value="Bacteria"/>
</dbReference>
<dbReference type="HOGENOM" id="CLU_084338_2_1_5"/>
<dbReference type="OrthoDB" id="9799969at2"/>
<dbReference type="Proteomes" id="UP000001176">
    <property type="component" value="Chromosome"/>
</dbReference>
<dbReference type="GO" id="GO:0005886">
    <property type="term" value="C:plasma membrane"/>
    <property type="evidence" value="ECO:0007669"/>
    <property type="project" value="UniProtKB-SubCell"/>
</dbReference>
<dbReference type="GO" id="GO:0045259">
    <property type="term" value="C:proton-transporting ATP synthase complex"/>
    <property type="evidence" value="ECO:0007669"/>
    <property type="project" value="UniProtKB-KW"/>
</dbReference>
<dbReference type="GO" id="GO:0005524">
    <property type="term" value="F:ATP binding"/>
    <property type="evidence" value="ECO:0007669"/>
    <property type="project" value="UniProtKB-UniRule"/>
</dbReference>
<dbReference type="GO" id="GO:0046933">
    <property type="term" value="F:proton-transporting ATP synthase activity, rotational mechanism"/>
    <property type="evidence" value="ECO:0007669"/>
    <property type="project" value="UniProtKB-UniRule"/>
</dbReference>
<dbReference type="CDD" id="cd12152">
    <property type="entry name" value="F1-ATPase_delta"/>
    <property type="match status" value="1"/>
</dbReference>
<dbReference type="Gene3D" id="2.60.15.10">
    <property type="entry name" value="F0F1 ATP synthase delta/epsilon subunit, N-terminal"/>
    <property type="match status" value="1"/>
</dbReference>
<dbReference type="HAMAP" id="MF_00530">
    <property type="entry name" value="ATP_synth_epsil_bac"/>
    <property type="match status" value="1"/>
</dbReference>
<dbReference type="InterPro" id="IPR001469">
    <property type="entry name" value="ATP_synth_F1_dsu/esu"/>
</dbReference>
<dbReference type="InterPro" id="IPR020546">
    <property type="entry name" value="ATP_synth_F1_dsu/esu_N"/>
</dbReference>
<dbReference type="InterPro" id="IPR036771">
    <property type="entry name" value="ATPsynth_dsu/esu_N"/>
</dbReference>
<dbReference type="NCBIfam" id="TIGR01216">
    <property type="entry name" value="ATP_synt_epsi"/>
    <property type="match status" value="1"/>
</dbReference>
<dbReference type="PANTHER" id="PTHR13822">
    <property type="entry name" value="ATP SYNTHASE DELTA/EPSILON CHAIN"/>
    <property type="match status" value="1"/>
</dbReference>
<dbReference type="PANTHER" id="PTHR13822:SF10">
    <property type="entry name" value="ATP SYNTHASE EPSILON CHAIN, CHLOROPLASTIC"/>
    <property type="match status" value="1"/>
</dbReference>
<dbReference type="Pfam" id="PF02823">
    <property type="entry name" value="ATP-synt_DE_N"/>
    <property type="match status" value="1"/>
</dbReference>
<dbReference type="SUPFAM" id="SSF51344">
    <property type="entry name" value="Epsilon subunit of F1F0-ATP synthase N-terminal domain"/>
    <property type="match status" value="1"/>
</dbReference>
<keyword id="KW-0066">ATP synthesis</keyword>
<keyword id="KW-0997">Cell inner membrane</keyword>
<keyword id="KW-1003">Cell membrane</keyword>
<keyword id="KW-0139">CF(1)</keyword>
<keyword id="KW-0375">Hydrogen ion transport</keyword>
<keyword id="KW-0406">Ion transport</keyword>
<keyword id="KW-0472">Membrane</keyword>
<keyword id="KW-1185">Reference proteome</keyword>
<keyword id="KW-0813">Transport</keyword>
<comment type="function">
    <text evidence="1">Produces ATP from ADP in the presence of a proton gradient across the membrane.</text>
</comment>
<comment type="subunit">
    <text evidence="1">F-type ATPases have 2 components, CF(1) - the catalytic core - and CF(0) - the membrane proton channel. CF(1) has five subunits: alpha(3), beta(3), gamma(1), delta(1), epsilon(1). CF(0) has three main subunits: a, b and c.</text>
</comment>
<comment type="subcellular location">
    <subcellularLocation>
        <location evidence="1">Cell inner membrane</location>
        <topology evidence="1">Peripheral membrane protein</topology>
    </subcellularLocation>
</comment>
<comment type="similarity">
    <text evidence="1">Belongs to the ATPase epsilon chain family.</text>
</comment>
<comment type="sequence caution" evidence="2">
    <conflict type="erroneous initiation">
        <sequence resource="EMBL-CDS" id="ACI51094"/>
    </conflict>
</comment>
<accession>A9H9B1</accession>
<accession>B5ZHL4</accession>
<reference key="1">
    <citation type="journal article" date="2009" name="BMC Genomics">
        <title>Complete genome sequence of the sugarcane nitrogen-fixing endophyte Gluconacetobacter diazotrophicus Pal5.</title>
        <authorList>
            <person name="Bertalan M."/>
            <person name="Albano R."/>
            <person name="de Padua V."/>
            <person name="Rouws L."/>
            <person name="Rojas C."/>
            <person name="Hemerly A."/>
            <person name="Teixeira K."/>
            <person name="Schwab S."/>
            <person name="Araujo J."/>
            <person name="Oliveira A."/>
            <person name="Franca L."/>
            <person name="Magalhaes V."/>
            <person name="Alqueres S."/>
            <person name="Cardoso A."/>
            <person name="Almeida W."/>
            <person name="Loureiro M.M."/>
            <person name="Nogueira E."/>
            <person name="Cidade D."/>
            <person name="Oliveira D."/>
            <person name="Simao T."/>
            <person name="Macedo J."/>
            <person name="Valadao A."/>
            <person name="Dreschsel M."/>
            <person name="Freitas F."/>
            <person name="Vidal M."/>
            <person name="Guedes H."/>
            <person name="Rodrigues E."/>
            <person name="Meneses C."/>
            <person name="Brioso P."/>
            <person name="Pozzer L."/>
            <person name="Figueiredo D."/>
            <person name="Montano H."/>
            <person name="Junior J."/>
            <person name="de Souza Filho G."/>
            <person name="Martin Quintana Flores V."/>
            <person name="Ferreira B."/>
            <person name="Branco A."/>
            <person name="Gonzalez P."/>
            <person name="Guillobel H."/>
            <person name="Lemos M."/>
            <person name="Seibel L."/>
            <person name="Macedo J."/>
            <person name="Alves-Ferreira M."/>
            <person name="Sachetto-Martins G."/>
            <person name="Coelho A."/>
            <person name="Santos E."/>
            <person name="Amaral G."/>
            <person name="Neves A."/>
            <person name="Pacheco A.B."/>
            <person name="Carvalho D."/>
            <person name="Lery L."/>
            <person name="Bisch P."/>
            <person name="Rossle S.C."/>
            <person name="Urmenyi T."/>
            <person name="Rael Pereira A."/>
            <person name="Silva R."/>
            <person name="Rondinelli E."/>
            <person name="von Kruger W."/>
            <person name="Martins O."/>
            <person name="Baldani J.I."/>
            <person name="Ferreira P.C."/>
        </authorList>
    </citation>
    <scope>NUCLEOTIDE SEQUENCE [LARGE SCALE GENOMIC DNA]</scope>
    <source>
        <strain>ATCC 49037 / DSM 5601 / CCUG 37298 / CIP 103539 / LMG 7603 / PAl5</strain>
    </source>
</reference>
<reference key="2">
    <citation type="journal article" date="2010" name="Stand. Genomic Sci.">
        <title>Two genome sequences of the same bacterial strain, Gluconacetobacter diazotrophicus PAl 5, suggest a new standard in genome sequence submission.</title>
        <authorList>
            <person name="Giongo A."/>
            <person name="Tyler H.L."/>
            <person name="Zipperer U.N."/>
            <person name="Triplett E.W."/>
        </authorList>
    </citation>
    <scope>NUCLEOTIDE SEQUENCE [LARGE SCALE GENOMIC DNA]</scope>
    <source>
        <strain>ATCC 49037 / DSM 5601 / CCUG 37298 / CIP 103539 / LMG 7603 / PAl5</strain>
    </source>
</reference>
<protein>
    <recommendedName>
        <fullName evidence="1">ATP synthase epsilon chain</fullName>
    </recommendedName>
    <alternativeName>
        <fullName evidence="1">ATP synthase F1 sector epsilon subunit</fullName>
    </alternativeName>
    <alternativeName>
        <fullName evidence="1">F-ATPase epsilon subunit</fullName>
    </alternativeName>
</protein>
<feature type="chain" id="PRO_1000081734" description="ATP synthase epsilon chain">
    <location>
        <begin position="1"/>
        <end position="141"/>
    </location>
</feature>
<proteinExistence type="inferred from homology"/>
<name>ATPE_GLUDA</name>
<sequence length="141" mass="14830">MMPIKVEIVSPEKVLFSRAVDMALIPGLEGDIAAMPDHAPMMLLLRGGVVELHQDGAVTDRFFVAGGFADMTETSCTILADQATALSDLSVEAAQARLAELEASYDKADKMNVPVLDLLMAKMQSARAEIEAAGGPAVQGA</sequence>